<protein>
    <recommendedName>
        <fullName evidence="1">tRNA N6-adenosine threonylcarbamoyltransferase</fullName>
        <ecNumber evidence="1">2.3.1.234</ecNumber>
    </recommendedName>
    <alternativeName>
        <fullName evidence="1">N6-L-threonylcarbamoyladenine synthase</fullName>
        <shortName evidence="1">t(6)A synthase</shortName>
    </alternativeName>
    <alternativeName>
        <fullName evidence="1">t(6)A37 threonylcarbamoyladenosine biosynthesis protein TsaD</fullName>
    </alternativeName>
    <alternativeName>
        <fullName evidence="1">tRNA threonylcarbamoyladenosine biosynthesis protein TsaD</fullName>
    </alternativeName>
</protein>
<comment type="function">
    <text evidence="1">Required for the formation of a threonylcarbamoyl group on adenosine at position 37 (t(6)A37) in tRNAs that read codons beginning with adenine. Is involved in the transfer of the threonylcarbamoyl moiety of threonylcarbamoyl-AMP (TC-AMP) to the N6 group of A37, together with TsaE and TsaB. TsaD likely plays a direct catalytic role in this reaction.</text>
</comment>
<comment type="catalytic activity">
    <reaction evidence="1">
        <text>L-threonylcarbamoyladenylate + adenosine(37) in tRNA = N(6)-L-threonylcarbamoyladenosine(37) in tRNA + AMP + H(+)</text>
        <dbReference type="Rhea" id="RHEA:37059"/>
        <dbReference type="Rhea" id="RHEA-COMP:10162"/>
        <dbReference type="Rhea" id="RHEA-COMP:10163"/>
        <dbReference type="ChEBI" id="CHEBI:15378"/>
        <dbReference type="ChEBI" id="CHEBI:73682"/>
        <dbReference type="ChEBI" id="CHEBI:74411"/>
        <dbReference type="ChEBI" id="CHEBI:74418"/>
        <dbReference type="ChEBI" id="CHEBI:456215"/>
        <dbReference type="EC" id="2.3.1.234"/>
    </reaction>
</comment>
<comment type="cofactor">
    <cofactor evidence="1">
        <name>Fe(2+)</name>
        <dbReference type="ChEBI" id="CHEBI:29033"/>
    </cofactor>
    <text evidence="1">Binds 1 Fe(2+) ion per subunit.</text>
</comment>
<comment type="subcellular location">
    <subcellularLocation>
        <location evidence="1">Cytoplasm</location>
    </subcellularLocation>
</comment>
<comment type="similarity">
    <text evidence="1">Belongs to the KAE1 / TsaD family.</text>
</comment>
<feature type="chain" id="PRO_1000146013" description="tRNA N6-adenosine threonylcarbamoyltransferase">
    <location>
        <begin position="1"/>
        <end position="363"/>
    </location>
</feature>
<feature type="binding site" evidence="1">
    <location>
        <position position="121"/>
    </location>
    <ligand>
        <name>Fe cation</name>
        <dbReference type="ChEBI" id="CHEBI:24875"/>
    </ligand>
</feature>
<feature type="binding site" evidence="1">
    <location>
        <position position="125"/>
    </location>
    <ligand>
        <name>Fe cation</name>
        <dbReference type="ChEBI" id="CHEBI:24875"/>
    </ligand>
</feature>
<feature type="binding site" evidence="1">
    <location>
        <begin position="143"/>
        <end position="147"/>
    </location>
    <ligand>
        <name>substrate</name>
    </ligand>
</feature>
<feature type="binding site" evidence="1">
    <location>
        <position position="176"/>
    </location>
    <ligand>
        <name>substrate</name>
    </ligand>
</feature>
<feature type="binding site" evidence="1">
    <location>
        <position position="189"/>
    </location>
    <ligand>
        <name>substrate</name>
    </ligand>
</feature>
<feature type="binding site" evidence="1">
    <location>
        <position position="287"/>
    </location>
    <ligand>
        <name>substrate</name>
    </ligand>
</feature>
<feature type="binding site" evidence="1">
    <location>
        <position position="315"/>
    </location>
    <ligand>
        <name>Fe cation</name>
        <dbReference type="ChEBI" id="CHEBI:24875"/>
    </ligand>
</feature>
<reference key="1">
    <citation type="submission" date="2008-05" db="EMBL/GenBank/DDBJ databases">
        <title>Complete sequence of Rhodopseudomonas palustris TIE-1.</title>
        <authorList>
            <consortium name="US DOE Joint Genome Institute"/>
            <person name="Lucas S."/>
            <person name="Copeland A."/>
            <person name="Lapidus A."/>
            <person name="Glavina del Rio T."/>
            <person name="Dalin E."/>
            <person name="Tice H."/>
            <person name="Pitluck S."/>
            <person name="Chain P."/>
            <person name="Malfatti S."/>
            <person name="Shin M."/>
            <person name="Vergez L."/>
            <person name="Lang D."/>
            <person name="Schmutz J."/>
            <person name="Larimer F."/>
            <person name="Land M."/>
            <person name="Hauser L."/>
            <person name="Kyrpides N."/>
            <person name="Mikhailova N."/>
            <person name="Emerson D."/>
            <person name="Newman D.K."/>
            <person name="Roden E."/>
            <person name="Richardson P."/>
        </authorList>
    </citation>
    <scope>NUCLEOTIDE SEQUENCE [LARGE SCALE GENOMIC DNA]</scope>
    <source>
        <strain>TIE-1</strain>
    </source>
</reference>
<name>TSAD_RHOPT</name>
<gene>
    <name evidence="1" type="primary">tsaD</name>
    <name type="synonym">gcp</name>
    <name type="ordered locus">Rpal_0256</name>
</gene>
<dbReference type="EC" id="2.3.1.234" evidence="1"/>
<dbReference type="EMBL" id="CP001096">
    <property type="protein sequence ID" value="ACE98816.1"/>
    <property type="molecule type" value="Genomic_DNA"/>
</dbReference>
<dbReference type="SMR" id="B3Q867"/>
<dbReference type="KEGG" id="rpt:Rpal_0256"/>
<dbReference type="HOGENOM" id="CLU_023208_0_2_5"/>
<dbReference type="Proteomes" id="UP000001725">
    <property type="component" value="Chromosome"/>
</dbReference>
<dbReference type="GO" id="GO:0005737">
    <property type="term" value="C:cytoplasm"/>
    <property type="evidence" value="ECO:0007669"/>
    <property type="project" value="UniProtKB-SubCell"/>
</dbReference>
<dbReference type="GO" id="GO:0005506">
    <property type="term" value="F:iron ion binding"/>
    <property type="evidence" value="ECO:0007669"/>
    <property type="project" value="UniProtKB-UniRule"/>
</dbReference>
<dbReference type="GO" id="GO:0061711">
    <property type="term" value="F:N(6)-L-threonylcarbamoyladenine synthase activity"/>
    <property type="evidence" value="ECO:0007669"/>
    <property type="project" value="UniProtKB-EC"/>
</dbReference>
<dbReference type="GO" id="GO:0002949">
    <property type="term" value="P:tRNA threonylcarbamoyladenosine modification"/>
    <property type="evidence" value="ECO:0007669"/>
    <property type="project" value="UniProtKB-UniRule"/>
</dbReference>
<dbReference type="CDD" id="cd24133">
    <property type="entry name" value="ASKHA_NBD_TsaD_bac"/>
    <property type="match status" value="1"/>
</dbReference>
<dbReference type="FunFam" id="3.30.420.40:FF:000012">
    <property type="entry name" value="tRNA N6-adenosine threonylcarbamoyltransferase"/>
    <property type="match status" value="1"/>
</dbReference>
<dbReference type="Gene3D" id="3.30.420.40">
    <property type="match status" value="2"/>
</dbReference>
<dbReference type="HAMAP" id="MF_01445">
    <property type="entry name" value="TsaD"/>
    <property type="match status" value="1"/>
</dbReference>
<dbReference type="InterPro" id="IPR043129">
    <property type="entry name" value="ATPase_NBD"/>
</dbReference>
<dbReference type="InterPro" id="IPR000905">
    <property type="entry name" value="Gcp-like_dom"/>
</dbReference>
<dbReference type="InterPro" id="IPR017861">
    <property type="entry name" value="KAE1/TsaD"/>
</dbReference>
<dbReference type="InterPro" id="IPR017860">
    <property type="entry name" value="Peptidase_M22_CS"/>
</dbReference>
<dbReference type="InterPro" id="IPR022450">
    <property type="entry name" value="TsaD"/>
</dbReference>
<dbReference type="NCBIfam" id="TIGR00329">
    <property type="entry name" value="gcp_kae1"/>
    <property type="match status" value="1"/>
</dbReference>
<dbReference type="NCBIfam" id="TIGR03723">
    <property type="entry name" value="T6A_TsaD_YgjD"/>
    <property type="match status" value="1"/>
</dbReference>
<dbReference type="PANTHER" id="PTHR11735">
    <property type="entry name" value="TRNA N6-ADENOSINE THREONYLCARBAMOYLTRANSFERASE"/>
    <property type="match status" value="1"/>
</dbReference>
<dbReference type="PANTHER" id="PTHR11735:SF6">
    <property type="entry name" value="TRNA N6-ADENOSINE THREONYLCARBAMOYLTRANSFERASE, MITOCHONDRIAL"/>
    <property type="match status" value="1"/>
</dbReference>
<dbReference type="Pfam" id="PF00814">
    <property type="entry name" value="TsaD"/>
    <property type="match status" value="1"/>
</dbReference>
<dbReference type="PRINTS" id="PR00789">
    <property type="entry name" value="OSIALOPTASE"/>
</dbReference>
<dbReference type="SUPFAM" id="SSF53067">
    <property type="entry name" value="Actin-like ATPase domain"/>
    <property type="match status" value="2"/>
</dbReference>
<dbReference type="PROSITE" id="PS01016">
    <property type="entry name" value="GLYCOPROTEASE"/>
    <property type="match status" value="1"/>
</dbReference>
<organism>
    <name type="scientific">Rhodopseudomonas palustris (strain TIE-1)</name>
    <dbReference type="NCBI Taxonomy" id="395960"/>
    <lineage>
        <taxon>Bacteria</taxon>
        <taxon>Pseudomonadati</taxon>
        <taxon>Pseudomonadota</taxon>
        <taxon>Alphaproteobacteria</taxon>
        <taxon>Hyphomicrobiales</taxon>
        <taxon>Nitrobacteraceae</taxon>
        <taxon>Rhodopseudomonas</taxon>
    </lineage>
</organism>
<keyword id="KW-0012">Acyltransferase</keyword>
<keyword id="KW-0963">Cytoplasm</keyword>
<keyword id="KW-0408">Iron</keyword>
<keyword id="KW-0479">Metal-binding</keyword>
<keyword id="KW-0808">Transferase</keyword>
<keyword id="KW-0819">tRNA processing</keyword>
<evidence type="ECO:0000255" key="1">
    <source>
        <dbReference type="HAMAP-Rule" id="MF_01445"/>
    </source>
</evidence>
<proteinExistence type="inferred from homology"/>
<accession>B3Q867</accession>
<sequence length="363" mass="37494">MTSEQALLVLGIETTCDETAAAVVERRADGSGRLLSNIVRSQTDEHAPFGGVVPEIAARAHVDVLDGIIAAAMNEAGVAFASLSGVAAAAGPGLIGGVIVGLTTAKAIALVHGTPLIAVNHLEAHALTPRLTDAVEFPYCLFLASGGHTQIVAVLGVGNYVRLGTTVDDAIGEAFDKIAKMLGLPYPGGPQVERAAEAGDPNRFAFPRPMLGRQDANFSLSGLKTAVRNEAGKLTPLDPQDINDLCAGFQAAVLESVADRLGAGLRLFKERFGPPKALVAAGGAAANQAIRRMLREVAAKVQTTLIVPPPSLCTDNGAMIAWAGAERLALGLTDTMDTAPRARWLLDANATAPAKFANTRAGF</sequence>